<comment type="function">
    <text>This protein is involved in the oxidative metabolism of a variety of xenobiotics such as drugs and pesticides.</text>
</comment>
<comment type="catalytic activity">
    <reaction>
        <text>N,N-dimethylaniline + NADPH + O2 + H(+) = N,N-dimethylaniline N-oxide + NADP(+) + H2O</text>
        <dbReference type="Rhea" id="RHEA:24468"/>
        <dbReference type="ChEBI" id="CHEBI:15377"/>
        <dbReference type="ChEBI" id="CHEBI:15378"/>
        <dbReference type="ChEBI" id="CHEBI:15379"/>
        <dbReference type="ChEBI" id="CHEBI:16269"/>
        <dbReference type="ChEBI" id="CHEBI:17735"/>
        <dbReference type="ChEBI" id="CHEBI:57783"/>
        <dbReference type="ChEBI" id="CHEBI:58349"/>
        <dbReference type="EC" id="1.14.13.8"/>
    </reaction>
</comment>
<comment type="cofactor">
    <cofactor>
        <name>FAD</name>
        <dbReference type="ChEBI" id="CHEBI:57692"/>
    </cofactor>
</comment>
<comment type="interaction">
    <interactant intactId="EBI-17589491">
        <id>P31512</id>
    </interactant>
    <interactant intactId="EBI-17589229">
        <id>Q6NTF9-3</id>
        <label>RHBDD2</label>
    </interactant>
    <organismsDiffer>false</organismsDiffer>
    <experiments>3</experiments>
</comment>
<comment type="subcellular location">
    <subcellularLocation>
        <location evidence="1">Microsome membrane</location>
        <topology evidence="3">Single-pass membrane protein</topology>
    </subcellularLocation>
    <subcellularLocation>
        <location evidence="1">Endoplasmic reticulum membrane</location>
        <topology evidence="3">Single-pass membrane protein</topology>
    </subcellularLocation>
</comment>
<comment type="tissue specificity">
    <text>Liver.</text>
</comment>
<comment type="similarity">
    <text evidence="7">Belongs to the FMO family.</text>
</comment>
<comment type="caution">
    <text evidence="8">Was originally termed FMO2.</text>
</comment>
<gene>
    <name type="primary">FMO4</name>
    <name type="synonym">FMO2</name>
</gene>
<name>FMO4_HUMAN</name>
<sequence length="558" mass="63343">MAKKVAVIGAGVSGLSSIKCCVDEDLEPTCFERSDDIGGLWKFTESSKDGMTRVYKSLVTNVCKEMSCYSDFPFHEDYPNFMNHEKFWDYLQEFAEHFDLLKYIQFKTTVCSITKRPDFSETGQWDVVTETEGKQNRAVFDAVMVCTGHFLNPHLPLEAFPGIHKFKGQILHSQEYKIPEGFQGKRVLVIGLGNTGGDIAVELSRTAAQVLLSTRTGTWVLGRSSDWGYPYNMMVTRRCCSFIAQVLPSRFLNWIQERKLNKRFNHEDYGLSITKGKKAKFIVNDELPNCILCGAITMKTSVIEFTETSAVFEDGTVEENIDVVIFTTGYTFSFPFFEEPLKSLCTKKIFLYKQVFPLNLERATLAIIGLIGLKGSILSGTELQARWVTRVFKGLCKIPPSQKLMMEATEKEQLIKRGVFKDTSKDKFDYIAYMDDIAACIGTKPSIPLLFLKDPRLAWEVFFGPCTPYQYRLMGPGKWDGARNAILTQWDRTLKPLKTRIVPDSSKPASMSHYLKAWGAPVLLASLLLICKSSLFLKLVRDKLQDRMSPYLVSLWRG</sequence>
<dbReference type="EC" id="1.14.13.8"/>
<dbReference type="EMBL" id="Z11737">
    <property type="protein sequence ID" value="CAA77797.1"/>
    <property type="molecule type" value="mRNA"/>
</dbReference>
<dbReference type="EMBL" id="AY882422">
    <property type="protein sequence ID" value="AAW56938.1"/>
    <property type="molecule type" value="Genomic_DNA"/>
</dbReference>
<dbReference type="EMBL" id="BT007444">
    <property type="protein sequence ID" value="AAP36112.1"/>
    <property type="molecule type" value="mRNA"/>
</dbReference>
<dbReference type="EMBL" id="AL031274">
    <property type="status" value="NOT_ANNOTATED_CDS"/>
    <property type="molecule type" value="Genomic_DNA"/>
</dbReference>
<dbReference type="EMBL" id="CH471067">
    <property type="protein sequence ID" value="EAW90896.1"/>
    <property type="molecule type" value="Genomic_DNA"/>
</dbReference>
<dbReference type="EMBL" id="BC002780">
    <property type="protein sequence ID" value="AAH02780.1"/>
    <property type="molecule type" value="mRNA"/>
</dbReference>
<dbReference type="CCDS" id="CCDS1295.1"/>
<dbReference type="PIR" id="S29125">
    <property type="entry name" value="S29125"/>
</dbReference>
<dbReference type="RefSeq" id="NP_002013.1">
    <property type="nucleotide sequence ID" value="NM_002022.3"/>
</dbReference>
<dbReference type="SMR" id="P31512"/>
<dbReference type="BioGRID" id="108616">
    <property type="interactions" value="3"/>
</dbReference>
<dbReference type="FunCoup" id="P31512">
    <property type="interactions" value="106"/>
</dbReference>
<dbReference type="IntAct" id="P31512">
    <property type="interactions" value="2"/>
</dbReference>
<dbReference type="STRING" id="9606.ENSP00000356723"/>
<dbReference type="ChEMBL" id="CHEMBL3542432"/>
<dbReference type="iPTMnet" id="P31512"/>
<dbReference type="PhosphoSitePlus" id="P31512"/>
<dbReference type="BioMuta" id="FMO4"/>
<dbReference type="DMDM" id="399506"/>
<dbReference type="MassIVE" id="P31512"/>
<dbReference type="PaxDb" id="9606-ENSP00000356723"/>
<dbReference type="PeptideAtlas" id="P31512"/>
<dbReference type="ProteomicsDB" id="54792"/>
<dbReference type="Antibodypedia" id="34378">
    <property type="antibodies" value="102 antibodies from 21 providers"/>
</dbReference>
<dbReference type="DNASU" id="2329"/>
<dbReference type="Ensembl" id="ENST00000367749.4">
    <property type="protein sequence ID" value="ENSP00000356723.3"/>
    <property type="gene ID" value="ENSG00000076258.10"/>
</dbReference>
<dbReference type="GeneID" id="2329"/>
<dbReference type="KEGG" id="hsa:2329"/>
<dbReference type="MANE-Select" id="ENST00000367749.4">
    <property type="protein sequence ID" value="ENSP00000356723.3"/>
    <property type="RefSeq nucleotide sequence ID" value="NM_002022.3"/>
    <property type="RefSeq protein sequence ID" value="NP_002013.1"/>
</dbReference>
<dbReference type="UCSC" id="uc001gho.4">
    <property type="organism name" value="human"/>
</dbReference>
<dbReference type="AGR" id="HGNC:3772"/>
<dbReference type="CTD" id="2329"/>
<dbReference type="DisGeNET" id="2329"/>
<dbReference type="GeneCards" id="FMO4"/>
<dbReference type="HGNC" id="HGNC:3772">
    <property type="gene designation" value="FMO4"/>
</dbReference>
<dbReference type="HPA" id="ENSG00000076258">
    <property type="expression patterns" value="Group enriched (kidney, liver)"/>
</dbReference>
<dbReference type="MIM" id="136131">
    <property type="type" value="gene"/>
</dbReference>
<dbReference type="neXtProt" id="NX_P31512"/>
<dbReference type="OpenTargets" id="ENSG00000076258"/>
<dbReference type="PharmGKB" id="PA28188"/>
<dbReference type="VEuPathDB" id="HostDB:ENSG00000076258"/>
<dbReference type="eggNOG" id="KOG1399">
    <property type="taxonomic scope" value="Eukaryota"/>
</dbReference>
<dbReference type="GeneTree" id="ENSGT00940000160256"/>
<dbReference type="HOGENOM" id="CLU_006909_8_2_1"/>
<dbReference type="InParanoid" id="P31512"/>
<dbReference type="OMA" id="HYLKVWG"/>
<dbReference type="OrthoDB" id="66881at2759"/>
<dbReference type="PAN-GO" id="P31512">
    <property type="GO annotations" value="1 GO annotation based on evolutionary models"/>
</dbReference>
<dbReference type="PhylomeDB" id="P31512"/>
<dbReference type="TreeFam" id="TF105285"/>
<dbReference type="BRENDA" id="1.14.13.8">
    <property type="organism ID" value="2681"/>
</dbReference>
<dbReference type="PathwayCommons" id="P31512"/>
<dbReference type="SignaLink" id="P31512"/>
<dbReference type="BioGRID-ORCS" id="2329">
    <property type="hits" value="9 hits in 1148 CRISPR screens"/>
</dbReference>
<dbReference type="ChiTaRS" id="FMO4">
    <property type="organism name" value="human"/>
</dbReference>
<dbReference type="GeneWiki" id="FMO4"/>
<dbReference type="GenomeRNAi" id="2329"/>
<dbReference type="Pharos" id="P31512">
    <property type="development level" value="Tbio"/>
</dbReference>
<dbReference type="PRO" id="PR:P31512"/>
<dbReference type="Proteomes" id="UP000005640">
    <property type="component" value="Chromosome 1"/>
</dbReference>
<dbReference type="RNAct" id="P31512">
    <property type="molecule type" value="protein"/>
</dbReference>
<dbReference type="Bgee" id="ENSG00000076258">
    <property type="expression patterns" value="Expressed in nephron tubule and 134 other cell types or tissues"/>
</dbReference>
<dbReference type="GO" id="GO:0005789">
    <property type="term" value="C:endoplasmic reticulum membrane"/>
    <property type="evidence" value="ECO:0007669"/>
    <property type="project" value="UniProtKB-SubCell"/>
</dbReference>
<dbReference type="GO" id="GO:0050660">
    <property type="term" value="F:flavin adenine dinucleotide binding"/>
    <property type="evidence" value="ECO:0007669"/>
    <property type="project" value="InterPro"/>
</dbReference>
<dbReference type="GO" id="GO:0004499">
    <property type="term" value="F:N,N-dimethylaniline monooxygenase activity"/>
    <property type="evidence" value="ECO:0000318"/>
    <property type="project" value="GO_Central"/>
</dbReference>
<dbReference type="GO" id="GO:0050661">
    <property type="term" value="F:NADP binding"/>
    <property type="evidence" value="ECO:0007669"/>
    <property type="project" value="InterPro"/>
</dbReference>
<dbReference type="GO" id="GO:0097009">
    <property type="term" value="P:energy homeostasis"/>
    <property type="evidence" value="ECO:0007669"/>
    <property type="project" value="Ensembl"/>
</dbReference>
<dbReference type="GO" id="GO:0046322">
    <property type="term" value="P:negative regulation of fatty acid oxidation"/>
    <property type="evidence" value="ECO:0007669"/>
    <property type="project" value="Ensembl"/>
</dbReference>
<dbReference type="GO" id="GO:0042178">
    <property type="term" value="P:xenobiotic catabolic process"/>
    <property type="evidence" value="ECO:0007669"/>
    <property type="project" value="Ensembl"/>
</dbReference>
<dbReference type="FunFam" id="3.50.50.60:FF:000023">
    <property type="entry name" value="Dimethylaniline monooxygenase [N-oxide-forming]"/>
    <property type="match status" value="1"/>
</dbReference>
<dbReference type="FunFam" id="3.50.50.60:FF:000042">
    <property type="entry name" value="Dimethylaniline monooxygenase [N-oxide-forming]"/>
    <property type="match status" value="1"/>
</dbReference>
<dbReference type="FunFam" id="3.50.50.60:FF:000073">
    <property type="entry name" value="Dimethylaniline monooxygenase [N-oxide-forming]"/>
    <property type="match status" value="1"/>
</dbReference>
<dbReference type="FunFam" id="3.50.50.60:FF:000183">
    <property type="entry name" value="Dimethylaniline monooxygenase [N-oxide-forming]"/>
    <property type="match status" value="1"/>
</dbReference>
<dbReference type="Gene3D" id="3.50.50.60">
    <property type="entry name" value="FAD/NAD(P)-binding domain"/>
    <property type="match status" value="1"/>
</dbReference>
<dbReference type="InterPro" id="IPR036188">
    <property type="entry name" value="FAD/NAD-bd_sf"/>
</dbReference>
<dbReference type="InterPro" id="IPR000960">
    <property type="entry name" value="Flavin_mOase"/>
</dbReference>
<dbReference type="InterPro" id="IPR020946">
    <property type="entry name" value="Flavin_mOase-like"/>
</dbReference>
<dbReference type="InterPro" id="IPR002256">
    <property type="entry name" value="Flavin_mOase_4"/>
</dbReference>
<dbReference type="InterPro" id="IPR050346">
    <property type="entry name" value="FMO-like"/>
</dbReference>
<dbReference type="PANTHER" id="PTHR23023">
    <property type="entry name" value="DIMETHYLANILINE MONOOXYGENASE"/>
    <property type="match status" value="1"/>
</dbReference>
<dbReference type="Pfam" id="PF00743">
    <property type="entry name" value="FMO-like"/>
    <property type="match status" value="1"/>
</dbReference>
<dbReference type="PIRSF" id="PIRSF000332">
    <property type="entry name" value="FMO"/>
    <property type="match status" value="1"/>
</dbReference>
<dbReference type="PRINTS" id="PR00370">
    <property type="entry name" value="FMOXYGENASE"/>
</dbReference>
<dbReference type="PRINTS" id="PR01124">
    <property type="entry name" value="FMOXYGENASE4"/>
</dbReference>
<dbReference type="SUPFAM" id="SSF51905">
    <property type="entry name" value="FAD/NAD(P)-binding domain"/>
    <property type="match status" value="2"/>
</dbReference>
<proteinExistence type="evidence at protein level"/>
<keyword id="KW-0256">Endoplasmic reticulum</keyword>
<keyword id="KW-0274">FAD</keyword>
<keyword id="KW-0285">Flavoprotein</keyword>
<keyword id="KW-0472">Membrane</keyword>
<keyword id="KW-0492">Microsome</keyword>
<keyword id="KW-0503">Monooxygenase</keyword>
<keyword id="KW-0521">NADP</keyword>
<keyword id="KW-0560">Oxidoreductase</keyword>
<keyword id="KW-1267">Proteomics identification</keyword>
<keyword id="KW-1185">Reference proteome</keyword>
<keyword id="KW-0812">Transmembrane</keyword>
<keyword id="KW-1133">Transmembrane helix</keyword>
<feature type="chain" id="PRO_0000147660" description="Dimethylaniline monooxygenase [N-oxide-forming] 4">
    <location>
        <begin position="1"/>
        <end position="558"/>
    </location>
</feature>
<feature type="transmembrane region" description="Helical" evidence="3">
    <location>
        <begin position="517"/>
        <end position="537"/>
    </location>
</feature>
<feature type="binding site" evidence="2">
    <location>
        <begin position="9"/>
        <end position="13"/>
    </location>
    <ligand>
        <name>FAD</name>
        <dbReference type="ChEBI" id="CHEBI:57692"/>
    </ligand>
</feature>
<feature type="binding site" evidence="2">
    <location>
        <position position="32"/>
    </location>
    <ligand>
        <name>FAD</name>
        <dbReference type="ChEBI" id="CHEBI:57692"/>
    </ligand>
</feature>
<feature type="binding site" evidence="2">
    <location>
        <begin position="40"/>
        <end position="41"/>
    </location>
    <ligand>
        <name>FAD</name>
        <dbReference type="ChEBI" id="CHEBI:57692"/>
    </ligand>
</feature>
<feature type="binding site" evidence="2">
    <location>
        <begin position="60"/>
        <end position="61"/>
    </location>
    <ligand>
        <name>NADP(+)</name>
        <dbReference type="ChEBI" id="CHEBI:58349"/>
    </ligand>
</feature>
<feature type="binding site" evidence="2">
    <location>
        <begin position="195"/>
        <end position="198"/>
    </location>
    <ligand>
        <name>NADP(+)</name>
        <dbReference type="ChEBI" id="CHEBI:58349"/>
    </ligand>
</feature>
<feature type="sequence variant" id="VAR_084652" description="Found in a patient with intellectual disability; uncertain significance; dbSNP:rs866374389." evidence="5">
    <original>P</original>
    <variation>H</variation>
    <location>
        <position position="28"/>
    </location>
</feature>
<feature type="sequence variant" id="VAR_015367" description="In dbSNP:rs72549338." evidence="4">
    <original>I</original>
    <variation>T</variation>
    <location>
        <position position="37"/>
    </location>
</feature>
<feature type="sequence variant" id="VAR_049090" description="In dbSNP:rs3737925.">
    <original>T</original>
    <variation>S</variation>
    <location>
        <position position="308"/>
    </location>
</feature>
<feature type="sequence variant" id="VAR_015368" description="In dbSNP:rs1042767." evidence="4 6">
    <original>V</original>
    <variation>A</variation>
    <location>
        <position position="323"/>
    </location>
</feature>
<feature type="sequence variant" id="VAR_015369" description="In dbSNP:rs61342270." evidence="4">
    <original>E</original>
    <variation>Q</variation>
    <location>
        <position position="339"/>
    </location>
</feature>
<feature type="sequence variant" id="VAR_022305" description="In dbSNP:rs45599742." evidence="6">
    <original>G</original>
    <variation>S</variation>
    <location>
        <position position="372"/>
    </location>
</feature>
<feature type="sequence variant" id="VAR_022306" description="In dbSNP:rs45487792." evidence="6">
    <original>F</original>
    <variation>L</variation>
    <location>
        <position position="536"/>
    </location>
</feature>
<feature type="sequence variant" id="VAR_022307" description="In dbSNP:rs45528740." evidence="6">
    <original>L</original>
    <variation>R</variation>
    <location>
        <position position="544"/>
    </location>
</feature>
<evidence type="ECO:0000250" key="1">
    <source>
        <dbReference type="UniProtKB" id="Q8K4B7"/>
    </source>
</evidence>
<evidence type="ECO:0000250" key="2">
    <source>
        <dbReference type="UniProtKB" id="Q9HFE4"/>
    </source>
</evidence>
<evidence type="ECO:0000255" key="3"/>
<evidence type="ECO:0000269" key="4">
    <source>
    </source>
</evidence>
<evidence type="ECO:0000269" key="5">
    <source>
    </source>
</evidence>
<evidence type="ECO:0000269" key="6">
    <source ref="2"/>
</evidence>
<evidence type="ECO:0000305" key="7"/>
<evidence type="ECO:0000305" key="8">
    <source>
    </source>
</evidence>
<protein>
    <recommendedName>
        <fullName>Dimethylaniline monooxygenase [N-oxide-forming] 4</fullName>
        <ecNumber>1.14.13.8</ecNumber>
    </recommendedName>
    <alternativeName>
        <fullName>Dimethylaniline oxidase 4</fullName>
    </alternativeName>
    <alternativeName>
        <fullName>Hepatic flavin-containing monooxygenase 4</fullName>
        <shortName>FMO 4</shortName>
    </alternativeName>
</protein>
<accession>P31512</accession>
<accession>Q53XR0</accession>
<organism>
    <name type="scientific">Homo sapiens</name>
    <name type="common">Human</name>
    <dbReference type="NCBI Taxonomy" id="9606"/>
    <lineage>
        <taxon>Eukaryota</taxon>
        <taxon>Metazoa</taxon>
        <taxon>Chordata</taxon>
        <taxon>Craniata</taxon>
        <taxon>Vertebrata</taxon>
        <taxon>Euteleostomi</taxon>
        <taxon>Mammalia</taxon>
        <taxon>Eutheria</taxon>
        <taxon>Euarchontoglires</taxon>
        <taxon>Primates</taxon>
        <taxon>Haplorrhini</taxon>
        <taxon>Catarrhini</taxon>
        <taxon>Hominidae</taxon>
        <taxon>Homo</taxon>
    </lineage>
</organism>
<reference key="1">
    <citation type="journal article" date="1992" name="Biochem. J.">
        <title>Cloning, primary sequence and chromosomal localization of human FMO2, a new member of the flavin-containing mono-oxygenase family.</title>
        <authorList>
            <person name="Dolphin C.T."/>
            <person name="Shephard E.A."/>
            <person name="Povey S."/>
            <person name="Smith R.L."/>
            <person name="Phillips I.R."/>
        </authorList>
    </citation>
    <scope>NUCLEOTIDE SEQUENCE [MRNA]</scope>
    <source>
        <tissue>Liver</tissue>
    </source>
</reference>
<reference key="2">
    <citation type="submission" date="2005-01" db="EMBL/GenBank/DDBJ databases">
        <authorList>
            <consortium name="NIEHS SNPs program"/>
        </authorList>
    </citation>
    <scope>NUCLEOTIDE SEQUENCE [GENOMIC DNA]</scope>
    <scope>VARIANTS ALA-323; SER-372; LEU-536 AND ARG-544</scope>
</reference>
<reference key="3">
    <citation type="submission" date="2003-05" db="EMBL/GenBank/DDBJ databases">
        <title>Cloning of human full-length CDSs in BD Creator(TM) system donor vector.</title>
        <authorList>
            <person name="Kalnine N."/>
            <person name="Chen X."/>
            <person name="Rolfs A."/>
            <person name="Halleck A."/>
            <person name="Hines L."/>
            <person name="Eisenstein S."/>
            <person name="Koundinya M."/>
            <person name="Raphael J."/>
            <person name="Moreira D."/>
            <person name="Kelley T."/>
            <person name="LaBaer J."/>
            <person name="Lin Y."/>
            <person name="Phelan M."/>
            <person name="Farmer A."/>
        </authorList>
    </citation>
    <scope>NUCLEOTIDE SEQUENCE [LARGE SCALE MRNA]</scope>
</reference>
<reference key="4">
    <citation type="journal article" date="2006" name="Nature">
        <title>The DNA sequence and biological annotation of human chromosome 1.</title>
        <authorList>
            <person name="Gregory S.G."/>
            <person name="Barlow K.F."/>
            <person name="McLay K.E."/>
            <person name="Kaul R."/>
            <person name="Swarbreck D."/>
            <person name="Dunham A."/>
            <person name="Scott C.E."/>
            <person name="Howe K.L."/>
            <person name="Woodfine K."/>
            <person name="Spencer C.C.A."/>
            <person name="Jones M.C."/>
            <person name="Gillson C."/>
            <person name="Searle S."/>
            <person name="Zhou Y."/>
            <person name="Kokocinski F."/>
            <person name="McDonald L."/>
            <person name="Evans R."/>
            <person name="Phillips K."/>
            <person name="Atkinson A."/>
            <person name="Cooper R."/>
            <person name="Jones C."/>
            <person name="Hall R.E."/>
            <person name="Andrews T.D."/>
            <person name="Lloyd C."/>
            <person name="Ainscough R."/>
            <person name="Almeida J.P."/>
            <person name="Ambrose K.D."/>
            <person name="Anderson F."/>
            <person name="Andrew R.W."/>
            <person name="Ashwell R.I.S."/>
            <person name="Aubin K."/>
            <person name="Babbage A.K."/>
            <person name="Bagguley C.L."/>
            <person name="Bailey J."/>
            <person name="Beasley H."/>
            <person name="Bethel G."/>
            <person name="Bird C.P."/>
            <person name="Bray-Allen S."/>
            <person name="Brown J.Y."/>
            <person name="Brown A.J."/>
            <person name="Buckley D."/>
            <person name="Burton J."/>
            <person name="Bye J."/>
            <person name="Carder C."/>
            <person name="Chapman J.C."/>
            <person name="Clark S.Y."/>
            <person name="Clarke G."/>
            <person name="Clee C."/>
            <person name="Cobley V."/>
            <person name="Collier R.E."/>
            <person name="Corby N."/>
            <person name="Coville G.J."/>
            <person name="Davies J."/>
            <person name="Deadman R."/>
            <person name="Dunn M."/>
            <person name="Earthrowl M."/>
            <person name="Ellington A.G."/>
            <person name="Errington H."/>
            <person name="Frankish A."/>
            <person name="Frankland J."/>
            <person name="French L."/>
            <person name="Garner P."/>
            <person name="Garnett J."/>
            <person name="Gay L."/>
            <person name="Ghori M.R.J."/>
            <person name="Gibson R."/>
            <person name="Gilby L.M."/>
            <person name="Gillett W."/>
            <person name="Glithero R.J."/>
            <person name="Grafham D.V."/>
            <person name="Griffiths C."/>
            <person name="Griffiths-Jones S."/>
            <person name="Grocock R."/>
            <person name="Hammond S."/>
            <person name="Harrison E.S.I."/>
            <person name="Hart E."/>
            <person name="Haugen E."/>
            <person name="Heath P.D."/>
            <person name="Holmes S."/>
            <person name="Holt K."/>
            <person name="Howden P.J."/>
            <person name="Hunt A.R."/>
            <person name="Hunt S.E."/>
            <person name="Hunter G."/>
            <person name="Isherwood J."/>
            <person name="James R."/>
            <person name="Johnson C."/>
            <person name="Johnson D."/>
            <person name="Joy A."/>
            <person name="Kay M."/>
            <person name="Kershaw J.K."/>
            <person name="Kibukawa M."/>
            <person name="Kimberley A.M."/>
            <person name="King A."/>
            <person name="Knights A.J."/>
            <person name="Lad H."/>
            <person name="Laird G."/>
            <person name="Lawlor S."/>
            <person name="Leongamornlert D.A."/>
            <person name="Lloyd D.M."/>
            <person name="Loveland J."/>
            <person name="Lovell J."/>
            <person name="Lush M.J."/>
            <person name="Lyne R."/>
            <person name="Martin S."/>
            <person name="Mashreghi-Mohammadi M."/>
            <person name="Matthews L."/>
            <person name="Matthews N.S.W."/>
            <person name="McLaren S."/>
            <person name="Milne S."/>
            <person name="Mistry S."/>
            <person name="Moore M.J.F."/>
            <person name="Nickerson T."/>
            <person name="O'Dell C.N."/>
            <person name="Oliver K."/>
            <person name="Palmeiri A."/>
            <person name="Palmer S.A."/>
            <person name="Parker A."/>
            <person name="Patel D."/>
            <person name="Pearce A.V."/>
            <person name="Peck A.I."/>
            <person name="Pelan S."/>
            <person name="Phelps K."/>
            <person name="Phillimore B.J."/>
            <person name="Plumb R."/>
            <person name="Rajan J."/>
            <person name="Raymond C."/>
            <person name="Rouse G."/>
            <person name="Saenphimmachak C."/>
            <person name="Sehra H.K."/>
            <person name="Sheridan E."/>
            <person name="Shownkeen R."/>
            <person name="Sims S."/>
            <person name="Skuce C.D."/>
            <person name="Smith M."/>
            <person name="Steward C."/>
            <person name="Subramanian S."/>
            <person name="Sycamore N."/>
            <person name="Tracey A."/>
            <person name="Tromans A."/>
            <person name="Van Helmond Z."/>
            <person name="Wall M."/>
            <person name="Wallis J.M."/>
            <person name="White S."/>
            <person name="Whitehead S.L."/>
            <person name="Wilkinson J.E."/>
            <person name="Willey D.L."/>
            <person name="Williams H."/>
            <person name="Wilming L."/>
            <person name="Wray P.W."/>
            <person name="Wu Z."/>
            <person name="Coulson A."/>
            <person name="Vaudin M."/>
            <person name="Sulston J.E."/>
            <person name="Durbin R.M."/>
            <person name="Hubbard T."/>
            <person name="Wooster R."/>
            <person name="Dunham I."/>
            <person name="Carter N.P."/>
            <person name="McVean G."/>
            <person name="Ross M.T."/>
            <person name="Harrow J."/>
            <person name="Olson M.V."/>
            <person name="Beck S."/>
            <person name="Rogers J."/>
            <person name="Bentley D.R."/>
        </authorList>
    </citation>
    <scope>NUCLEOTIDE SEQUENCE [LARGE SCALE GENOMIC DNA]</scope>
</reference>
<reference key="5">
    <citation type="submission" date="2005-07" db="EMBL/GenBank/DDBJ databases">
        <authorList>
            <person name="Mural R.J."/>
            <person name="Istrail S."/>
            <person name="Sutton G.G."/>
            <person name="Florea L."/>
            <person name="Halpern A.L."/>
            <person name="Mobarry C.M."/>
            <person name="Lippert R."/>
            <person name="Walenz B."/>
            <person name="Shatkay H."/>
            <person name="Dew I."/>
            <person name="Miller J.R."/>
            <person name="Flanigan M.J."/>
            <person name="Edwards N.J."/>
            <person name="Bolanos R."/>
            <person name="Fasulo D."/>
            <person name="Halldorsson B.V."/>
            <person name="Hannenhalli S."/>
            <person name="Turner R."/>
            <person name="Yooseph S."/>
            <person name="Lu F."/>
            <person name="Nusskern D.R."/>
            <person name="Shue B.C."/>
            <person name="Zheng X.H."/>
            <person name="Zhong F."/>
            <person name="Delcher A.L."/>
            <person name="Huson D.H."/>
            <person name="Kravitz S.A."/>
            <person name="Mouchard L."/>
            <person name="Reinert K."/>
            <person name="Remington K.A."/>
            <person name="Clark A.G."/>
            <person name="Waterman M.S."/>
            <person name="Eichler E.E."/>
            <person name="Adams M.D."/>
            <person name="Hunkapiller M.W."/>
            <person name="Myers E.W."/>
            <person name="Venter J.C."/>
        </authorList>
    </citation>
    <scope>NUCLEOTIDE SEQUENCE [LARGE SCALE GENOMIC DNA]</scope>
</reference>
<reference key="6">
    <citation type="journal article" date="2004" name="Genome Res.">
        <title>The status, quality, and expansion of the NIH full-length cDNA project: the Mammalian Gene Collection (MGC).</title>
        <authorList>
            <consortium name="The MGC Project Team"/>
        </authorList>
    </citation>
    <scope>NUCLEOTIDE SEQUENCE [LARGE SCALE MRNA]</scope>
    <source>
        <tissue>Skin</tissue>
    </source>
</reference>
<reference key="7">
    <citation type="journal article" date="2014" name="J. Proteomics">
        <title>An enzyme assisted RP-RPLC approach for in-depth analysis of human liver phosphoproteome.</title>
        <authorList>
            <person name="Bian Y."/>
            <person name="Song C."/>
            <person name="Cheng K."/>
            <person name="Dong M."/>
            <person name="Wang F."/>
            <person name="Huang J."/>
            <person name="Sun D."/>
            <person name="Wang L."/>
            <person name="Ye M."/>
            <person name="Zou H."/>
        </authorList>
    </citation>
    <scope>IDENTIFICATION BY MASS SPECTROMETRY [LARGE SCALE ANALYSIS]</scope>
    <source>
        <tissue>Liver</tissue>
    </source>
</reference>
<reference key="8">
    <citation type="journal article" date="2003" name="Drug Metab. Dispos.">
        <title>Identification of novel variants of the flavin-containing monooxygenase gene family in African Americans.</title>
        <authorList>
            <person name="Furnes B."/>
            <person name="Feng J."/>
            <person name="Sommer S.S."/>
            <person name="Schlenk D."/>
        </authorList>
    </citation>
    <scope>VARIANTS THR-37; ALA-323 AND GLN-339</scope>
</reference>
<reference key="9">
    <citation type="journal article" date="2017" name="Hum. Genet.">
        <title>Expanding the genetic heterogeneity of intellectual disability.</title>
        <authorList>
            <person name="Anazi S."/>
            <person name="Maddirevula S."/>
            <person name="Salpietro V."/>
            <person name="Asi Y.T."/>
            <person name="Alsahli S."/>
            <person name="Alhashem A."/>
            <person name="Shamseldin H.E."/>
            <person name="AlZahrani F."/>
            <person name="Patel N."/>
            <person name="Ibrahim N."/>
            <person name="Abdulwahab F.M."/>
            <person name="Hashem M."/>
            <person name="Alhashmi N."/>
            <person name="Al Murshedi F."/>
            <person name="Al Kindy A."/>
            <person name="Alshaer A."/>
            <person name="Rumayyan A."/>
            <person name="Al Tala S."/>
            <person name="Kurdi W."/>
            <person name="Alsaman A."/>
            <person name="Alasmari A."/>
            <person name="Banu S."/>
            <person name="Sultan T."/>
            <person name="Saleh M.M."/>
            <person name="Alkuraya H."/>
            <person name="Salih M.A."/>
            <person name="Aldhalaan H."/>
            <person name="Ben-Omran T."/>
            <person name="Al Musafri F."/>
            <person name="Ali R."/>
            <person name="Suleiman J."/>
            <person name="Tabarki B."/>
            <person name="El-Hattab A.W."/>
            <person name="Bupp C."/>
            <person name="Alfadhel M."/>
            <person name="Al Tassan N."/>
            <person name="Monies D."/>
            <person name="Arold S.T."/>
            <person name="Abouelhoda M."/>
            <person name="Lashley T."/>
            <person name="Houlden H."/>
            <person name="Faqeih E."/>
            <person name="Alkuraya F.S."/>
        </authorList>
    </citation>
    <scope>VARIANT HIS-28</scope>
</reference>
<reference key="10">
    <citation type="journal article" date="2018" name="Hum. Genet.">
        <title>Correction to: Expanding the genetic heterogeneity of intellectual disability.</title>
        <authorList>
            <person name="Anazi S."/>
            <person name="Maddirevula S."/>
            <person name="Salpietro V."/>
            <person name="Asi Y.T."/>
            <person name="Alsahli S."/>
            <person name="Alhashem A."/>
            <person name="Shamseldin H.E."/>
            <person name="AlZahrani F."/>
            <person name="Patel N."/>
            <person name="Ibrahim N."/>
            <person name="Abdulwahab F.M."/>
            <person name="Hashem M."/>
            <person name="Alhashmi N."/>
            <person name="Al Murshedi F."/>
            <person name="Al Kindy A."/>
            <person name="Alshaer A."/>
            <person name="Rumayyan A."/>
            <person name="Al Tala S."/>
            <person name="Kurdi W."/>
            <person name="Alsaman A."/>
            <person name="Alasmari A."/>
            <person name="Banu S."/>
            <person name="Sultan T."/>
            <person name="Saleh M.M."/>
            <person name="Alkuraya H."/>
            <person name="Salih M.A."/>
            <person name="Aldhalaan H."/>
            <person name="Ben-Omran T."/>
            <person name="Al Musafri F."/>
            <person name="Ali R."/>
            <person name="Suleiman J."/>
            <person name="Tabarki B."/>
            <person name="El-Hattab A.W."/>
            <person name="Bupp C."/>
            <person name="Alfadhel M."/>
            <person name="Al Tassan N."/>
            <person name="Monies D."/>
            <person name="Arold S.T."/>
            <person name="Abouelhoda M."/>
            <person name="Lashley T."/>
            <person name="Houlden H."/>
            <person name="Faqeih E."/>
            <person name="Alkuraya F.S."/>
        </authorList>
    </citation>
    <scope>ERRATUM OF PUBMED:28940097</scope>
</reference>